<gene>
    <name evidence="1" type="primary">leuC</name>
    <name type="ordered locus">Mboo_2075</name>
</gene>
<name>LEUC_METB6</name>
<accession>A7IA28</accession>
<reference key="1">
    <citation type="journal article" date="2015" name="Microbiology">
        <title>Genome of Methanoregula boonei 6A8 reveals adaptations to oligotrophic peatland environments.</title>
        <authorList>
            <person name="Braeuer S."/>
            <person name="Cadillo-Quiroz H."/>
            <person name="Kyrpides N."/>
            <person name="Woyke T."/>
            <person name="Goodwin L."/>
            <person name="Detter C."/>
            <person name="Podell S."/>
            <person name="Yavitt J.B."/>
            <person name="Zinder S.H."/>
        </authorList>
    </citation>
    <scope>NUCLEOTIDE SEQUENCE [LARGE SCALE GENOMIC DNA]</scope>
    <source>
        <strain>DSM 21154 / JCM 14090 / 6A8</strain>
    </source>
</reference>
<proteinExistence type="inferred from homology"/>
<evidence type="ECO:0000255" key="1">
    <source>
        <dbReference type="HAMAP-Rule" id="MF_01027"/>
    </source>
</evidence>
<dbReference type="EC" id="4.2.1.33" evidence="1"/>
<dbReference type="EMBL" id="CP000780">
    <property type="protein sequence ID" value="ABS56589.1"/>
    <property type="molecule type" value="Genomic_DNA"/>
</dbReference>
<dbReference type="RefSeq" id="WP_012107645.1">
    <property type="nucleotide sequence ID" value="NC_009712.1"/>
</dbReference>
<dbReference type="SMR" id="A7IA28"/>
<dbReference type="STRING" id="456442.Mboo_2075"/>
<dbReference type="GeneID" id="5409784"/>
<dbReference type="KEGG" id="mbn:Mboo_2075"/>
<dbReference type="eggNOG" id="arCOG01698">
    <property type="taxonomic scope" value="Archaea"/>
</dbReference>
<dbReference type="HOGENOM" id="CLU_006714_3_4_2"/>
<dbReference type="OrthoDB" id="255at2157"/>
<dbReference type="UniPathway" id="UPA00048">
    <property type="reaction ID" value="UER00071"/>
</dbReference>
<dbReference type="Proteomes" id="UP000002408">
    <property type="component" value="Chromosome"/>
</dbReference>
<dbReference type="GO" id="GO:0003861">
    <property type="term" value="F:3-isopropylmalate dehydratase activity"/>
    <property type="evidence" value="ECO:0007669"/>
    <property type="project" value="UniProtKB-UniRule"/>
</dbReference>
<dbReference type="GO" id="GO:0051539">
    <property type="term" value="F:4 iron, 4 sulfur cluster binding"/>
    <property type="evidence" value="ECO:0007669"/>
    <property type="project" value="UniProtKB-KW"/>
</dbReference>
<dbReference type="GO" id="GO:0046872">
    <property type="term" value="F:metal ion binding"/>
    <property type="evidence" value="ECO:0007669"/>
    <property type="project" value="UniProtKB-KW"/>
</dbReference>
<dbReference type="GO" id="GO:0009098">
    <property type="term" value="P:L-leucine biosynthetic process"/>
    <property type="evidence" value="ECO:0007669"/>
    <property type="project" value="UniProtKB-UniRule"/>
</dbReference>
<dbReference type="CDD" id="cd01583">
    <property type="entry name" value="IPMI"/>
    <property type="match status" value="1"/>
</dbReference>
<dbReference type="Gene3D" id="3.30.499.10">
    <property type="entry name" value="Aconitase, domain 3"/>
    <property type="match status" value="2"/>
</dbReference>
<dbReference type="HAMAP" id="MF_01027">
    <property type="entry name" value="LeuC_type2"/>
    <property type="match status" value="1"/>
</dbReference>
<dbReference type="InterPro" id="IPR015931">
    <property type="entry name" value="Acnase/IPM_dHydase_lsu_aba_1/3"/>
</dbReference>
<dbReference type="InterPro" id="IPR001030">
    <property type="entry name" value="Acoase/IPM_deHydtase_lsu_aba"/>
</dbReference>
<dbReference type="InterPro" id="IPR018136">
    <property type="entry name" value="Aconitase_4Fe-4S_BS"/>
</dbReference>
<dbReference type="InterPro" id="IPR036008">
    <property type="entry name" value="Aconitase_4Fe-4S_dom"/>
</dbReference>
<dbReference type="InterPro" id="IPR011826">
    <property type="entry name" value="HAcnase/IPMdehydase_lsu_prok"/>
</dbReference>
<dbReference type="InterPro" id="IPR006251">
    <property type="entry name" value="Homoacnase/IPMdehydase_lsu"/>
</dbReference>
<dbReference type="InterPro" id="IPR050067">
    <property type="entry name" value="IPM_dehydratase_rel_enz"/>
</dbReference>
<dbReference type="InterPro" id="IPR033941">
    <property type="entry name" value="IPMI_cat"/>
</dbReference>
<dbReference type="NCBIfam" id="TIGR01343">
    <property type="entry name" value="hacA_fam"/>
    <property type="match status" value="1"/>
</dbReference>
<dbReference type="NCBIfam" id="TIGR02086">
    <property type="entry name" value="IPMI_arch"/>
    <property type="match status" value="1"/>
</dbReference>
<dbReference type="NCBIfam" id="NF001614">
    <property type="entry name" value="PRK00402.1"/>
    <property type="match status" value="1"/>
</dbReference>
<dbReference type="PANTHER" id="PTHR43822">
    <property type="entry name" value="HOMOACONITASE, MITOCHONDRIAL-RELATED"/>
    <property type="match status" value="1"/>
</dbReference>
<dbReference type="PANTHER" id="PTHR43822:SF22">
    <property type="entry name" value="ISOPROPYLMALATE_CITRAMALATE ISOMERASE LARGE SUBUNIT"/>
    <property type="match status" value="1"/>
</dbReference>
<dbReference type="Pfam" id="PF00330">
    <property type="entry name" value="Aconitase"/>
    <property type="match status" value="2"/>
</dbReference>
<dbReference type="PRINTS" id="PR00415">
    <property type="entry name" value="ACONITASE"/>
</dbReference>
<dbReference type="SUPFAM" id="SSF53732">
    <property type="entry name" value="Aconitase iron-sulfur domain"/>
    <property type="match status" value="1"/>
</dbReference>
<dbReference type="PROSITE" id="PS00450">
    <property type="entry name" value="ACONITASE_1"/>
    <property type="match status" value="1"/>
</dbReference>
<dbReference type="PROSITE" id="PS01244">
    <property type="entry name" value="ACONITASE_2"/>
    <property type="match status" value="1"/>
</dbReference>
<organism>
    <name type="scientific">Methanoregula boonei (strain DSM 21154 / JCM 14090 / 6A8)</name>
    <dbReference type="NCBI Taxonomy" id="456442"/>
    <lineage>
        <taxon>Archaea</taxon>
        <taxon>Methanobacteriati</taxon>
        <taxon>Methanobacteriota</taxon>
        <taxon>Stenosarchaea group</taxon>
        <taxon>Methanomicrobia</taxon>
        <taxon>Methanomicrobiales</taxon>
        <taxon>Methanoregulaceae</taxon>
        <taxon>Methanoregula</taxon>
    </lineage>
</organism>
<protein>
    <recommendedName>
        <fullName evidence="1">3-isopropylmalate dehydratase large subunit</fullName>
        <ecNumber evidence="1">4.2.1.33</ecNumber>
    </recommendedName>
    <alternativeName>
        <fullName evidence="1">Alpha-IPM isomerase</fullName>
        <shortName evidence="1">IPMI</shortName>
    </alternativeName>
    <alternativeName>
        <fullName evidence="1">Isopropylmalate isomerase</fullName>
    </alternativeName>
</protein>
<feature type="chain" id="PRO_0000319845" description="3-isopropylmalate dehydratase large subunit">
    <location>
        <begin position="1"/>
        <end position="416"/>
    </location>
</feature>
<feature type="binding site" evidence="1">
    <location>
        <position position="297"/>
    </location>
    <ligand>
        <name>[4Fe-4S] cluster</name>
        <dbReference type="ChEBI" id="CHEBI:49883"/>
    </ligand>
</feature>
<feature type="binding site" evidence="1">
    <location>
        <position position="357"/>
    </location>
    <ligand>
        <name>[4Fe-4S] cluster</name>
        <dbReference type="ChEBI" id="CHEBI:49883"/>
    </ligand>
</feature>
<feature type="binding site" evidence="1">
    <location>
        <position position="360"/>
    </location>
    <ligand>
        <name>[4Fe-4S] cluster</name>
        <dbReference type="ChEBI" id="CHEBI:49883"/>
    </ligand>
</feature>
<keyword id="KW-0004">4Fe-4S</keyword>
<keyword id="KW-0028">Amino-acid biosynthesis</keyword>
<keyword id="KW-0100">Branched-chain amino acid biosynthesis</keyword>
<keyword id="KW-0408">Iron</keyword>
<keyword id="KW-0411">Iron-sulfur</keyword>
<keyword id="KW-0432">Leucine biosynthesis</keyword>
<keyword id="KW-0456">Lyase</keyword>
<keyword id="KW-0479">Metal-binding</keyword>
<keyword id="KW-1185">Reference proteome</keyword>
<comment type="function">
    <text evidence="1">Catalyzes the isomerization between 2-isopropylmalate and 3-isopropylmalate, via the formation of 2-isopropylmaleate.</text>
</comment>
<comment type="catalytic activity">
    <reaction evidence="1">
        <text>(2R,3S)-3-isopropylmalate = (2S)-2-isopropylmalate</text>
        <dbReference type="Rhea" id="RHEA:32287"/>
        <dbReference type="ChEBI" id="CHEBI:1178"/>
        <dbReference type="ChEBI" id="CHEBI:35121"/>
        <dbReference type="EC" id="4.2.1.33"/>
    </reaction>
</comment>
<comment type="cofactor">
    <cofactor evidence="1">
        <name>[4Fe-4S] cluster</name>
        <dbReference type="ChEBI" id="CHEBI:49883"/>
    </cofactor>
    <text evidence="1">Binds 1 [4Fe-4S] cluster per subunit.</text>
</comment>
<comment type="pathway">
    <text evidence="1">Amino-acid biosynthesis; L-leucine biosynthesis; L-leucine from 3-methyl-2-oxobutanoate: step 2/4.</text>
</comment>
<comment type="subunit">
    <text evidence="1">Heterodimer of LeuC and LeuD.</text>
</comment>
<comment type="similarity">
    <text evidence="1">Belongs to the aconitase/IPM isomerase family. LeuC type 2 subfamily.</text>
</comment>
<sequence length="416" mass="44501">MGSTIVEKIFSRKCGSDIKAGEVVMAPIDGAMIHDITGPLAIRKFYEMGGKQVFDPKSVIMLFDHQIPADSLEAAENHVFMRKFAAEQGIHNYDINEGVCHQVVLEKGRAAPGEIVVGADSHTCMYGAVGAFATGIGSTDMGFALKFGALYFKVPETVRAEISGKFQKRVGAKDLILSIAADIGADGATYQAIEFTGKTISKMDMAGRMTCCNMAIEMGAKAGIVPPDKVTWEYMKGRRKITPFALASDDDAKFAEKRTYNVADLEPQVAVPHNVDQGIPVGKVEGTHIDQVFIGSCTNGRYEDLVEAAEVLGKKKFDPKVRVLVIPASRDEYLKALEAGLVERFVRAGALVEAPCCGPCMGGSFGLIAAGEVSLATSNRNFRGRQGSTEGKVYLCSPATAAASAIKGEITDPREV</sequence>